<organism>
    <name type="scientific">Escherichia coli (strain K12)</name>
    <dbReference type="NCBI Taxonomy" id="83333"/>
    <lineage>
        <taxon>Bacteria</taxon>
        <taxon>Pseudomonadati</taxon>
        <taxon>Pseudomonadota</taxon>
        <taxon>Gammaproteobacteria</taxon>
        <taxon>Enterobacterales</taxon>
        <taxon>Enterobacteriaceae</taxon>
        <taxon>Escherichia</taxon>
    </lineage>
</organism>
<reference key="1">
    <citation type="journal article" date="1996" name="DNA Res.">
        <title>A 718-kb DNA sequence of the Escherichia coli K-12 genome corresponding to the 12.7-28.0 min region on the linkage map.</title>
        <authorList>
            <person name="Oshima T."/>
            <person name="Aiba H."/>
            <person name="Baba T."/>
            <person name="Fujita K."/>
            <person name="Hayashi K."/>
            <person name="Honjo A."/>
            <person name="Ikemoto K."/>
            <person name="Inada T."/>
            <person name="Itoh T."/>
            <person name="Kajihara M."/>
            <person name="Kanai K."/>
            <person name="Kashimoto K."/>
            <person name="Kimura S."/>
            <person name="Kitagawa M."/>
            <person name="Makino K."/>
            <person name="Masuda S."/>
            <person name="Miki T."/>
            <person name="Mizobuchi K."/>
            <person name="Mori H."/>
            <person name="Motomura K."/>
            <person name="Nakamura Y."/>
            <person name="Nashimoto H."/>
            <person name="Nishio Y."/>
            <person name="Saito N."/>
            <person name="Sampei G."/>
            <person name="Seki Y."/>
            <person name="Tagami H."/>
            <person name="Takemoto K."/>
            <person name="Wada C."/>
            <person name="Yamamoto Y."/>
            <person name="Yano M."/>
            <person name="Horiuchi T."/>
        </authorList>
    </citation>
    <scope>NUCLEOTIDE SEQUENCE [LARGE SCALE GENOMIC DNA]</scope>
    <source>
        <strain>K12 / W3110 / ATCC 27325 / DSM 5911</strain>
    </source>
</reference>
<reference key="2">
    <citation type="journal article" date="1997" name="Science">
        <title>The complete genome sequence of Escherichia coli K-12.</title>
        <authorList>
            <person name="Blattner F.R."/>
            <person name="Plunkett G. III"/>
            <person name="Bloch C.A."/>
            <person name="Perna N.T."/>
            <person name="Burland V."/>
            <person name="Riley M."/>
            <person name="Collado-Vides J."/>
            <person name="Glasner J.D."/>
            <person name="Rode C.K."/>
            <person name="Mayhew G.F."/>
            <person name="Gregor J."/>
            <person name="Davis N.W."/>
            <person name="Kirkpatrick H.A."/>
            <person name="Goeden M.A."/>
            <person name="Rose D.J."/>
            <person name="Mau B."/>
            <person name="Shao Y."/>
        </authorList>
    </citation>
    <scope>NUCLEOTIDE SEQUENCE [LARGE SCALE GENOMIC DNA]</scope>
    <source>
        <strain>K12 / MG1655 / ATCC 47076</strain>
    </source>
</reference>
<reference key="3">
    <citation type="journal article" date="2006" name="Mol. Syst. Biol.">
        <title>Highly accurate genome sequences of Escherichia coli K-12 strains MG1655 and W3110.</title>
        <authorList>
            <person name="Hayashi K."/>
            <person name="Morooka N."/>
            <person name="Yamamoto Y."/>
            <person name="Fujita K."/>
            <person name="Isono K."/>
            <person name="Choi S."/>
            <person name="Ohtsubo E."/>
            <person name="Baba T."/>
            <person name="Wanner B.L."/>
            <person name="Mori H."/>
            <person name="Horiuchi T."/>
        </authorList>
    </citation>
    <scope>NUCLEOTIDE SEQUENCE [LARGE SCALE GENOMIC DNA]</scope>
    <source>
        <strain>K12 / W3110 / ATCC 27325 / DSM 5911</strain>
    </source>
</reference>
<reference key="4">
    <citation type="journal article" date="2005" name="Science">
        <title>Global topology analysis of the Escherichia coli inner membrane proteome.</title>
        <authorList>
            <person name="Daley D.O."/>
            <person name="Rapp M."/>
            <person name="Granseth E."/>
            <person name="Melen K."/>
            <person name="Drew D."/>
            <person name="von Heijne G."/>
        </authorList>
    </citation>
    <scope>TOPOLOGY [LARGE SCALE ANALYSIS]</scope>
    <source>
        <strain>K12 / MG1655 / ATCC 47076</strain>
    </source>
</reference>
<evidence type="ECO:0000255" key="1"/>
<evidence type="ECO:0000305" key="2"/>
<name>YCDZ_ECOLI</name>
<accession>P75916</accession>
<comment type="subcellular location">
    <subcellularLocation>
        <location>Cell inner membrane</location>
        <topology>Multi-pass membrane protein</topology>
    </subcellularLocation>
</comment>
<comment type="similarity">
    <text evidence="2">To E.coli YahC.</text>
</comment>
<feature type="chain" id="PRO_0000168808" description="Inner membrane protein YcdZ">
    <location>
        <begin position="1"/>
        <end position="163"/>
    </location>
</feature>
<feature type="topological domain" description="Cytoplasmic" evidence="1">
    <location>
        <begin position="1"/>
        <end position="2"/>
    </location>
</feature>
<feature type="transmembrane region" description="Helical" evidence="1">
    <location>
        <begin position="3"/>
        <end position="23"/>
    </location>
</feature>
<feature type="topological domain" description="Periplasmic" evidence="1">
    <location>
        <position position="24"/>
    </location>
</feature>
<feature type="transmembrane region" description="Helical" evidence="1">
    <location>
        <begin position="25"/>
        <end position="45"/>
    </location>
</feature>
<feature type="topological domain" description="Cytoplasmic" evidence="1">
    <location>
        <begin position="46"/>
        <end position="48"/>
    </location>
</feature>
<feature type="transmembrane region" description="Helical" evidence="1">
    <location>
        <begin position="49"/>
        <end position="69"/>
    </location>
</feature>
<feature type="topological domain" description="Periplasmic" evidence="1">
    <location>
        <begin position="70"/>
        <end position="71"/>
    </location>
</feature>
<feature type="transmembrane region" description="Helical" evidence="1">
    <location>
        <begin position="72"/>
        <end position="92"/>
    </location>
</feature>
<feature type="topological domain" description="Cytoplasmic" evidence="1">
    <location>
        <begin position="93"/>
        <end position="98"/>
    </location>
</feature>
<feature type="transmembrane region" description="Helical" evidence="1">
    <location>
        <begin position="99"/>
        <end position="119"/>
    </location>
</feature>
<feature type="topological domain" description="Periplasmic" evidence="1">
    <location>
        <begin position="120"/>
        <end position="122"/>
    </location>
</feature>
<feature type="transmembrane region" description="Helical" evidence="1">
    <location>
        <begin position="123"/>
        <end position="143"/>
    </location>
</feature>
<feature type="topological domain" description="Cytoplasmic" evidence="1">
    <location>
        <begin position="144"/>
        <end position="163"/>
    </location>
</feature>
<proteinExistence type="evidence at protein level"/>
<gene>
    <name type="primary">ycdZ</name>
    <name type="ordered locus">b1036</name>
    <name type="ordered locus">JW5147</name>
</gene>
<protein>
    <recommendedName>
        <fullName>Inner membrane protein YcdZ</fullName>
    </recommendedName>
</protein>
<dbReference type="EMBL" id="U00096">
    <property type="protein sequence ID" value="AAC74120.2"/>
    <property type="molecule type" value="Genomic_DNA"/>
</dbReference>
<dbReference type="EMBL" id="AP009048">
    <property type="protein sequence ID" value="BAA35817.2"/>
    <property type="molecule type" value="Genomic_DNA"/>
</dbReference>
<dbReference type="PIR" id="A64846">
    <property type="entry name" value="A64846"/>
</dbReference>
<dbReference type="RefSeq" id="NP_415554.4">
    <property type="nucleotide sequence ID" value="NC_000913.3"/>
</dbReference>
<dbReference type="RefSeq" id="WP_001300785.1">
    <property type="nucleotide sequence ID" value="NZ_SSZK01000090.1"/>
</dbReference>
<dbReference type="BioGRID" id="4260063">
    <property type="interactions" value="15"/>
</dbReference>
<dbReference type="FunCoup" id="P75916">
    <property type="interactions" value="120"/>
</dbReference>
<dbReference type="STRING" id="511145.b1036"/>
<dbReference type="PaxDb" id="511145-b1036"/>
<dbReference type="EnsemblBacteria" id="AAC74120">
    <property type="protein sequence ID" value="AAC74120"/>
    <property type="gene ID" value="b1036"/>
</dbReference>
<dbReference type="GeneID" id="945617"/>
<dbReference type="KEGG" id="ecj:JW5147"/>
<dbReference type="KEGG" id="eco:b1036"/>
<dbReference type="KEGG" id="ecoc:C3026_06310"/>
<dbReference type="PATRIC" id="fig|511145.12.peg.1075"/>
<dbReference type="EchoBASE" id="EB3631"/>
<dbReference type="eggNOG" id="ENOG502ZBVY">
    <property type="taxonomic scope" value="Bacteria"/>
</dbReference>
<dbReference type="HOGENOM" id="CLU_104628_0_0_6"/>
<dbReference type="InParanoid" id="P75916"/>
<dbReference type="OMA" id="WGWVAIS"/>
<dbReference type="OrthoDB" id="8588554at2"/>
<dbReference type="PhylomeDB" id="P75916"/>
<dbReference type="BioCyc" id="EcoCyc:G6542-MONOMER"/>
<dbReference type="PRO" id="PR:P75916"/>
<dbReference type="Proteomes" id="UP000000625">
    <property type="component" value="Chromosome"/>
</dbReference>
<dbReference type="GO" id="GO:0005886">
    <property type="term" value="C:plasma membrane"/>
    <property type="evidence" value="ECO:0000314"/>
    <property type="project" value="EcoCyc"/>
</dbReference>
<dbReference type="InterPro" id="IPR009476">
    <property type="entry name" value="DUF1097"/>
</dbReference>
<dbReference type="Pfam" id="PF06496">
    <property type="entry name" value="DUF1097"/>
    <property type="match status" value="1"/>
</dbReference>
<sequence length="163" mass="17074">MNILLSIAITTGILSGIWGWVAVSLGLLSWAGFLGCTAYFACPQGGLKGLAISAATLLSGVVWAMVIIYGSALAPHLEILGYVITGIVAFLMCIQAKQLLLSFVPGTFIGACATFAGQGDWKLVLPSLALGLIFGYAMKNSGLWLAARSAKTAHREQEIKNKA</sequence>
<keyword id="KW-0997">Cell inner membrane</keyword>
<keyword id="KW-1003">Cell membrane</keyword>
<keyword id="KW-0472">Membrane</keyword>
<keyword id="KW-1185">Reference proteome</keyword>
<keyword id="KW-0812">Transmembrane</keyword>
<keyword id="KW-1133">Transmembrane helix</keyword>